<evidence type="ECO:0000250" key="1"/>
<evidence type="ECO:0000255" key="2">
    <source>
        <dbReference type="PROSITE-ProRule" id="PRU01056"/>
    </source>
</evidence>
<evidence type="ECO:0000269" key="3">
    <source>
    </source>
</evidence>
<evidence type="ECO:0000269" key="4">
    <source>
    </source>
</evidence>
<evidence type="ECO:0000269" key="5">
    <source>
    </source>
</evidence>
<evidence type="ECO:0000269" key="6">
    <source>
    </source>
</evidence>
<evidence type="ECO:0000269" key="7">
    <source>
    </source>
</evidence>
<evidence type="ECO:0000269" key="8">
    <source>
    </source>
</evidence>
<evidence type="ECO:0007744" key="9">
    <source>
    </source>
</evidence>
<evidence type="ECO:0007744" key="10">
    <source>
    </source>
</evidence>
<evidence type="ECO:0007744" key="11">
    <source>
    </source>
</evidence>
<evidence type="ECO:0007829" key="12">
    <source>
        <dbReference type="PDB" id="8FWP"/>
    </source>
</evidence>
<evidence type="ECO:0007829" key="13">
    <source>
        <dbReference type="PDB" id="8PFH"/>
    </source>
</evidence>
<evidence type="ECO:0007829" key="14">
    <source>
        <dbReference type="PDB" id="8SGD"/>
    </source>
</evidence>
<proteinExistence type="evidence at protein level"/>
<comment type="function">
    <text>Septins are GTPases involved in cytokinesis that assemble early in the cell cycle as a patch at the incipient bud site and form a ring approximate 15 minutes before bud emergence, which transforms into an hour-glass shaped collar of cortical filaments that spans both sides of the mother-bud neck. This collar persists until just before cytokinesis, when it splits into two rings that occupy opposite sides of the neck. The septins at the bud neck serve as a structural scaffold that recruits different components involved in diverse processes at specific stages during the cell cycle. Many proteins bind asymmetrically to the septin collar. The septin assembly is regulated by protein kinases GIN4 and/or CLA4. May act by recruiting MYO1 and HOF1, a protein involved in septation, to the site of cleavage. Septins are also involved in cell morphogenesis, bud site selection, chitin deposition, cell cycle regulation, cell compartmentalization and spore wall formation.</text>
</comment>
<comment type="subunit">
    <text evidence="3 4 7 8">Component of the septin complex which consists of CDC3, CDC10, CDC11, CDC12 and probably SHS1 and rearranges to a cortical collar of highly ordered filaments at the mother-bud-neck. A complex formed by CDC3, CDC10, CDC11 and CDC12 is capable of forming long filaments in vitro and the components seem to be present in a 2:2:2:2 arrangement in vivo. The filaments are proposed to be formed by the end-to-end polymerization of CDC3-CDC12-CDC11 complexes with CDC10 serving as a bridge to bundle the polymers into paired filaments. Component of the GIN4 complex composed of at least BNI5, CDC3, CDC10, CDC11, CDC12, GIN4, NAP1 and SHS1. Self-associates. Interacts with SYP1.</text>
</comment>
<comment type="interaction">
    <interactant intactId="EBI-4174">
        <id>P25342</id>
    </interactant>
    <interactant intactId="EBI-3848">
        <id>P47136</id>
        <label>BUD4</label>
    </interactant>
    <organismsDiffer>false</organismsDiffer>
    <experiments>3</experiments>
</comment>
<comment type="interaction">
    <interactant intactId="EBI-4174">
        <id>P25342</id>
    </interactant>
    <interactant intactId="EBI-4429">
        <id>P32457</id>
        <label>CDC3</label>
    </interactant>
    <organismsDiffer>false</organismsDiffer>
    <experiments>12</experiments>
</comment>
<comment type="subcellular location">
    <subcellularLocation>
        <location evidence="5">Membrane</location>
        <topology evidence="5">Peripheral membrane protein</topology>
    </subcellularLocation>
    <subcellularLocation>
        <location evidence="5">Bud neck</location>
    </subcellularLocation>
    <text>Present at the bud neck during cell division. Probably interacts with phosphoinosides such as phosphatidylinositol 4-phosphate or phosphatidylinositol 5-phosphate.</text>
</comment>
<comment type="miscellaneous">
    <text evidence="6">Present with 14100 molecules/cell in log phase SD medium.</text>
</comment>
<comment type="similarity">
    <text evidence="2">Belongs to the TRAFAC class TrmE-Era-EngA-EngB-Septin-like GTPase superfamily. Septin GTPase family.</text>
</comment>
<name>CDC10_YEAST</name>
<accession>P25342</accession>
<accession>D6VR12</accession>
<keyword id="KW-0002">3D-structure</keyword>
<keyword id="KW-0007">Acetylation</keyword>
<keyword id="KW-0131">Cell cycle</keyword>
<keyword id="KW-0132">Cell division</keyword>
<keyword id="KW-0342">GTP-binding</keyword>
<keyword id="KW-0472">Membrane</keyword>
<keyword id="KW-0547">Nucleotide-binding</keyword>
<keyword id="KW-0597">Phosphoprotein</keyword>
<keyword id="KW-1185">Reference proteome</keyword>
<reference key="1">
    <citation type="journal article" date="1996" name="Curr. Opin. Cell Biol.">
        <title>The septins: roles in cytokinesis and other processes.</title>
        <authorList>
            <person name="Longtine M.S."/>
            <person name="DeMarini D.J."/>
            <person name="Valencik M.L."/>
            <person name="Al-Awar O.S."/>
            <person name="Fares H."/>
            <person name="De Virgilio C."/>
            <person name="Pringle J.R."/>
        </authorList>
    </citation>
    <scope>NUCLEOTIDE SEQUENCE [GENOMIC DNA]</scope>
    <source>
        <strain>ATCC 26109 / X2180</strain>
    </source>
</reference>
<reference key="2">
    <citation type="journal article" date="1991" name="Yeast">
        <title>Sequence of the CDC10 region at chromosome III of Saccharomyces cerevisiae.</title>
        <authorList>
            <person name="Steensma H.Y."/>
            <person name="van der Aart Q.J.M."/>
        </authorList>
    </citation>
    <scope>NUCLEOTIDE SEQUENCE [GENOMIC DNA]</scope>
</reference>
<reference key="3">
    <citation type="journal article" date="1992" name="Nature">
        <title>The complete DNA sequence of yeast chromosome III.</title>
        <authorList>
            <person name="Oliver S.G."/>
            <person name="van der Aart Q.J.M."/>
            <person name="Agostoni-Carbone M.L."/>
            <person name="Aigle M."/>
            <person name="Alberghina L."/>
            <person name="Alexandraki D."/>
            <person name="Antoine G."/>
            <person name="Anwar R."/>
            <person name="Ballesta J.P.G."/>
            <person name="Benit P."/>
            <person name="Berben G."/>
            <person name="Bergantino E."/>
            <person name="Biteau N."/>
            <person name="Bolle P.-A."/>
            <person name="Bolotin-Fukuhara M."/>
            <person name="Brown A."/>
            <person name="Brown A.J.P."/>
            <person name="Buhler J.-M."/>
            <person name="Carcano C."/>
            <person name="Carignani G."/>
            <person name="Cederberg H."/>
            <person name="Chanet R."/>
            <person name="Contreras R."/>
            <person name="Crouzet M."/>
            <person name="Daignan-Fornier B."/>
            <person name="Defoor E."/>
            <person name="Delgado M.D."/>
            <person name="Demolder J."/>
            <person name="Doira C."/>
            <person name="Dubois E."/>
            <person name="Dujon B."/>
            <person name="Duesterhoeft A."/>
            <person name="Erdmann D."/>
            <person name="Esteban M."/>
            <person name="Fabre F."/>
            <person name="Fairhead C."/>
            <person name="Faye G."/>
            <person name="Feldmann H."/>
            <person name="Fiers W."/>
            <person name="Francingues-Gaillard M.-C."/>
            <person name="Franco L."/>
            <person name="Frontali L."/>
            <person name="Fukuhara H."/>
            <person name="Fuller L.J."/>
            <person name="Galland P."/>
            <person name="Gent M.E."/>
            <person name="Gigot D."/>
            <person name="Gilliquet V."/>
            <person name="Glansdorff N."/>
            <person name="Goffeau A."/>
            <person name="Grenson M."/>
            <person name="Grisanti P."/>
            <person name="Grivell L.A."/>
            <person name="de Haan M."/>
            <person name="Haasemann M."/>
            <person name="Hatat D."/>
            <person name="Hoenicka J."/>
            <person name="Hegemann J.H."/>
            <person name="Herbert C.J."/>
            <person name="Hilger F."/>
            <person name="Hohmann S."/>
            <person name="Hollenberg C.P."/>
            <person name="Huse K."/>
            <person name="Iborra F."/>
            <person name="Indge K.J."/>
            <person name="Isono K."/>
            <person name="Jacq C."/>
            <person name="Jacquet M."/>
            <person name="James C.M."/>
            <person name="Jauniaux J.-C."/>
            <person name="Jia Y."/>
            <person name="Jimenez A."/>
            <person name="Kelly A."/>
            <person name="Kleinhans U."/>
            <person name="Kreisl P."/>
            <person name="Lanfranchi G."/>
            <person name="Lewis C."/>
            <person name="van der Linden C.G."/>
            <person name="Lucchini G."/>
            <person name="Lutzenkirchen K."/>
            <person name="Maat M.J."/>
            <person name="Mallet L."/>
            <person name="Mannhaupt G."/>
            <person name="Martegani E."/>
            <person name="Mathieu A."/>
            <person name="Maurer C.T.C."/>
            <person name="McConnell D."/>
            <person name="McKee R.A."/>
            <person name="Messenguy F."/>
            <person name="Mewes H.-W."/>
            <person name="Molemans F."/>
            <person name="Montague M.A."/>
            <person name="Muzi Falconi M."/>
            <person name="Navas L."/>
            <person name="Newlon C.S."/>
            <person name="Noone D."/>
            <person name="Pallier C."/>
            <person name="Panzeri L."/>
            <person name="Pearson B.M."/>
            <person name="Perea J."/>
            <person name="Philippsen P."/>
            <person name="Pierard A."/>
            <person name="Planta R.J."/>
            <person name="Plevani P."/>
            <person name="Poetsch B."/>
            <person name="Pohl F.M."/>
            <person name="Purnelle B."/>
            <person name="Ramezani Rad M."/>
            <person name="Rasmussen S.W."/>
            <person name="Raynal A."/>
            <person name="Remacha M.A."/>
            <person name="Richterich P."/>
            <person name="Roberts A.B."/>
            <person name="Rodriguez F."/>
            <person name="Sanz E."/>
            <person name="Schaaff-Gerstenschlaeger I."/>
            <person name="Scherens B."/>
            <person name="Schweitzer B."/>
            <person name="Shu Y."/>
            <person name="Skala J."/>
            <person name="Slonimski P.P."/>
            <person name="Sor F."/>
            <person name="Soustelle C."/>
            <person name="Spiegelberg R."/>
            <person name="Stateva L.I."/>
            <person name="Steensma H.Y."/>
            <person name="Steiner S."/>
            <person name="Thierry A."/>
            <person name="Thireos G."/>
            <person name="Tzermia M."/>
            <person name="Urrestarazu L.A."/>
            <person name="Valle G."/>
            <person name="Vetter I."/>
            <person name="van Vliet-Reedijk J.C."/>
            <person name="Voet M."/>
            <person name="Volckaert G."/>
            <person name="Vreken P."/>
            <person name="Wang H."/>
            <person name="Warmington J.R."/>
            <person name="von Wettstein D."/>
            <person name="Wicksteed B.L."/>
            <person name="Wilson C."/>
            <person name="Wurst H."/>
            <person name="Xu G."/>
            <person name="Yoshikawa A."/>
            <person name="Zimmermann F.K."/>
            <person name="Sgouros J.G."/>
        </authorList>
    </citation>
    <scope>NUCLEOTIDE SEQUENCE [LARGE SCALE GENOMIC DNA]</scope>
    <source>
        <strain>ATCC 204508 / S288c</strain>
    </source>
</reference>
<reference key="4">
    <citation type="journal article" date="2014" name="G3 (Bethesda)">
        <title>The reference genome sequence of Saccharomyces cerevisiae: Then and now.</title>
        <authorList>
            <person name="Engel S.R."/>
            <person name="Dietrich F.S."/>
            <person name="Fisk D.G."/>
            <person name="Binkley G."/>
            <person name="Balakrishnan R."/>
            <person name="Costanzo M.C."/>
            <person name="Dwight S.S."/>
            <person name="Hitz B.C."/>
            <person name="Karra K."/>
            <person name="Nash R.S."/>
            <person name="Weng S."/>
            <person name="Wong E.D."/>
            <person name="Lloyd P."/>
            <person name="Skrzypek M.S."/>
            <person name="Miyasato S.R."/>
            <person name="Simison M."/>
            <person name="Cherry J.M."/>
        </authorList>
    </citation>
    <scope>GENOME REANNOTATION</scope>
    <source>
        <strain>ATCC 204508 / S288c</strain>
    </source>
</reference>
<reference key="5">
    <citation type="journal article" date="1998" name="J. Cell Biol.">
        <title>Polymerization of purified yeast septins: evidence that organized filament arrays may not be required for septin function.</title>
        <authorList>
            <person name="Frazier J.A."/>
            <person name="Wong M.L."/>
            <person name="Longtine M.S."/>
            <person name="Pringle J.R."/>
            <person name="Mann M."/>
            <person name="Mitchison T.J."/>
            <person name="Field C."/>
        </authorList>
    </citation>
    <scope>IDENTIFICATION IN THE SEPTIN COMPLEX</scope>
</reference>
<reference key="6">
    <citation type="journal article" date="2002" name="Mol. Biol. Cell">
        <title>Cell cycle-dependent assembly of a Gin4-septin complex.</title>
        <authorList>
            <person name="Mortensen E.M."/>
            <person name="McDonald H."/>
            <person name="Yates J. III"/>
            <person name="Kellogg D.R."/>
        </authorList>
    </citation>
    <scope>IDENTIFICATION IN THE GIN4 COMPLEX</scope>
    <scope>IDENTIFICATION BY MASS SPECTROMETRY</scope>
</reference>
<reference key="7">
    <citation type="journal article" date="2003" name="Mol. Cell. Biol.">
        <title>Molecular dissection of a yeast septin: distinct domains are required for septin interaction, localization, and function.</title>
        <authorList>
            <person name="Casamayor A."/>
            <person name="Snyder M."/>
        </authorList>
    </citation>
    <scope>ASSOCIATION WITH PHOSPHOINOSIDES LIPIDS</scope>
    <scope>INTERACTION WITH CDC11</scope>
</reference>
<reference key="8">
    <citation type="journal article" date="2003" name="Nature">
        <title>Global analysis of protein localization in budding yeast.</title>
        <authorList>
            <person name="Huh W.-K."/>
            <person name="Falvo J.V."/>
            <person name="Gerke L.C."/>
            <person name="Carroll A.S."/>
            <person name="Howson R.W."/>
            <person name="Weissman J.S."/>
            <person name="O'Shea E.K."/>
        </authorList>
    </citation>
    <scope>SUBCELLULAR LOCATION [LARGE SCALE ANALYSIS]</scope>
</reference>
<reference key="9">
    <citation type="journal article" date="2003" name="Nature">
        <title>Global analysis of protein expression in yeast.</title>
        <authorList>
            <person name="Ghaemmaghami S."/>
            <person name="Huh W.-K."/>
            <person name="Bower K."/>
            <person name="Howson R.W."/>
            <person name="Belle A."/>
            <person name="Dephoure N."/>
            <person name="O'Shea E.K."/>
            <person name="Weissman J.S."/>
        </authorList>
    </citation>
    <scope>LEVEL OF PROTEIN EXPRESSION [LARGE SCALE ANALYSIS]</scope>
</reference>
<reference key="10">
    <citation type="journal article" date="2004" name="Mol. Biol. Cell">
        <title>Protein-protein interactions governing septin heteropentamer assembly and septin filament organization in Saccharomyces cerevisiae.</title>
        <authorList>
            <person name="Versele M."/>
            <person name="Gullbrand B."/>
            <person name="Shulewitz M.J."/>
            <person name="Cid V.J."/>
            <person name="Bahmanyar S."/>
            <person name="Chen R.E."/>
            <person name="Barth P."/>
            <person name="Alber T."/>
            <person name="Thorner J."/>
        </authorList>
    </citation>
    <scope>SELF-ASSOCIATION</scope>
    <scope>ASSEMBLY OF THE SEPTIN FILAMENTS</scope>
</reference>
<reference key="11">
    <citation type="journal article" date="2007" name="J. Proteome Res.">
        <title>Large-scale phosphorylation analysis of alpha-factor-arrested Saccharomyces cerevisiae.</title>
        <authorList>
            <person name="Li X."/>
            <person name="Gerber S.A."/>
            <person name="Rudner A.D."/>
            <person name="Beausoleil S.A."/>
            <person name="Haas W."/>
            <person name="Villen J."/>
            <person name="Elias J.E."/>
            <person name="Gygi S.P."/>
        </authorList>
    </citation>
    <scope>PHOSPHORYLATION [LARGE SCALE ANALYSIS] AT THR-216</scope>
    <scope>IDENTIFICATION BY MASS SPECTROMETRY [LARGE SCALE ANALYSIS]</scope>
    <source>
        <strain>ADR376</strain>
    </source>
</reference>
<reference key="12">
    <citation type="journal article" date="2007" name="Proc. Natl. Acad. Sci. U.S.A.">
        <title>Analysis of phosphorylation sites on proteins from Saccharomyces cerevisiae by electron transfer dissociation (ETD) mass spectrometry.</title>
        <authorList>
            <person name="Chi A."/>
            <person name="Huttenhower C."/>
            <person name="Geer L.Y."/>
            <person name="Coon J.J."/>
            <person name="Syka J.E.P."/>
            <person name="Bai D.L."/>
            <person name="Shabanowitz J."/>
            <person name="Burke D.J."/>
            <person name="Troyanskaya O.G."/>
            <person name="Hunt D.F."/>
        </authorList>
    </citation>
    <scope>IDENTIFICATION BY MASS SPECTROMETRY [LARGE SCALE ANALYSIS]</scope>
</reference>
<reference key="13">
    <citation type="journal article" date="2008" name="Genetics">
        <title>A novel septin-associated protein, Syp1p, is required for normal cell cycle-dependent septin cytoskeleton dynamics in yeast.</title>
        <authorList>
            <person name="Qiu W."/>
            <person name="Neo S.P."/>
            <person name="Yu X."/>
            <person name="Cai M."/>
        </authorList>
    </citation>
    <scope>INTERACTION WITH SYP1</scope>
</reference>
<reference key="14">
    <citation type="journal article" date="2008" name="Mol. Cell. Proteomics">
        <title>A multidimensional chromatography technology for in-depth phosphoproteome analysis.</title>
        <authorList>
            <person name="Albuquerque C.P."/>
            <person name="Smolka M.B."/>
            <person name="Payne S.H."/>
            <person name="Bafna V."/>
            <person name="Eng J."/>
            <person name="Zhou H."/>
        </authorList>
    </citation>
    <scope>PHOSPHORYLATION [LARGE SCALE ANALYSIS] AT THR-216</scope>
    <scope>IDENTIFICATION BY MASS SPECTROMETRY [LARGE SCALE ANALYSIS]</scope>
</reference>
<reference key="15">
    <citation type="journal article" date="2009" name="Science">
        <title>Global analysis of Cdk1 substrate phosphorylation sites provides insights into evolution.</title>
        <authorList>
            <person name="Holt L.J."/>
            <person name="Tuch B.B."/>
            <person name="Villen J."/>
            <person name="Johnson A.D."/>
            <person name="Gygi S.P."/>
            <person name="Morgan D.O."/>
        </authorList>
    </citation>
    <scope>IDENTIFICATION BY MASS SPECTROMETRY [LARGE SCALE ANALYSIS]</scope>
</reference>
<reference key="16">
    <citation type="journal article" date="2012" name="Proc. Natl. Acad. Sci. U.S.A.">
        <title>N-terminal acetylome analyses and functional insights of the N-terminal acetyltransferase NatB.</title>
        <authorList>
            <person name="Van Damme P."/>
            <person name="Lasa M."/>
            <person name="Polevoda B."/>
            <person name="Gazquez C."/>
            <person name="Elosegui-Artola A."/>
            <person name="Kim D.S."/>
            <person name="De Juan-Pardo E."/>
            <person name="Demeyer K."/>
            <person name="Hole K."/>
            <person name="Larrea E."/>
            <person name="Timmerman E."/>
            <person name="Prieto J."/>
            <person name="Arnesen T."/>
            <person name="Sherman F."/>
            <person name="Gevaert K."/>
            <person name="Aldabe R."/>
        </authorList>
    </citation>
    <scope>ACETYLATION [LARGE SCALE ANALYSIS] AT MET-1</scope>
    <scope>IDENTIFICATION BY MASS SPECTROMETRY [LARGE SCALE ANALYSIS]</scope>
</reference>
<organism>
    <name type="scientific">Saccharomyces cerevisiae (strain ATCC 204508 / S288c)</name>
    <name type="common">Baker's yeast</name>
    <dbReference type="NCBI Taxonomy" id="559292"/>
    <lineage>
        <taxon>Eukaryota</taxon>
        <taxon>Fungi</taxon>
        <taxon>Dikarya</taxon>
        <taxon>Ascomycota</taxon>
        <taxon>Saccharomycotina</taxon>
        <taxon>Saccharomycetes</taxon>
        <taxon>Saccharomycetales</taxon>
        <taxon>Saccharomycetaceae</taxon>
        <taxon>Saccharomyces</taxon>
    </lineage>
</organism>
<feature type="chain" id="PRO_0000173498" description="Cell division control protein 10">
    <location>
        <begin position="1"/>
        <end position="322"/>
    </location>
</feature>
<feature type="domain" description="Septin-type G" evidence="2">
    <location>
        <begin position="29"/>
        <end position="302"/>
    </location>
</feature>
<feature type="region of interest" description="G1 motif" evidence="2">
    <location>
        <begin position="39"/>
        <end position="46"/>
    </location>
</feature>
<feature type="region of interest" description="G3 motif" evidence="2">
    <location>
        <begin position="97"/>
        <end position="100"/>
    </location>
</feature>
<feature type="region of interest" description="G4 motif" evidence="2">
    <location>
        <begin position="179"/>
        <end position="182"/>
    </location>
</feature>
<feature type="binding site" evidence="1">
    <location>
        <begin position="39"/>
        <end position="46"/>
    </location>
    <ligand>
        <name>GTP</name>
        <dbReference type="ChEBI" id="CHEBI:37565"/>
    </ligand>
</feature>
<feature type="binding site" evidence="1">
    <location>
        <position position="74"/>
    </location>
    <ligand>
        <name>GTP</name>
        <dbReference type="ChEBI" id="CHEBI:37565"/>
    </ligand>
</feature>
<feature type="binding site" evidence="1">
    <location>
        <position position="100"/>
    </location>
    <ligand>
        <name>GTP</name>
        <dbReference type="ChEBI" id="CHEBI:37565"/>
    </ligand>
</feature>
<feature type="binding site" evidence="1">
    <location>
        <begin position="180"/>
        <end position="188"/>
    </location>
    <ligand>
        <name>GTP</name>
        <dbReference type="ChEBI" id="CHEBI:37565"/>
    </ligand>
</feature>
<feature type="binding site" evidence="1">
    <location>
        <position position="236"/>
    </location>
    <ligand>
        <name>GTP</name>
        <dbReference type="ChEBI" id="CHEBI:37565"/>
    </ligand>
</feature>
<feature type="binding site" evidence="1">
    <location>
        <position position="251"/>
    </location>
    <ligand>
        <name>GTP</name>
        <dbReference type="ChEBI" id="CHEBI:37565"/>
    </ligand>
</feature>
<feature type="modified residue" description="N-acetylmethionine" evidence="11">
    <location>
        <position position="1"/>
    </location>
</feature>
<feature type="modified residue" description="Phosphothreonine" evidence="9 10">
    <location>
        <position position="216"/>
    </location>
</feature>
<feature type="helix" evidence="14">
    <location>
        <begin position="15"/>
        <end position="17"/>
    </location>
</feature>
<feature type="helix" evidence="14">
    <location>
        <begin position="18"/>
        <end position="29"/>
    </location>
</feature>
<feature type="strand" evidence="12">
    <location>
        <begin position="32"/>
        <end position="39"/>
    </location>
</feature>
<feature type="helix" evidence="12">
    <location>
        <begin position="45"/>
        <end position="53"/>
    </location>
</feature>
<feature type="helix" evidence="12">
    <location>
        <begin position="66"/>
        <end position="68"/>
    </location>
</feature>
<feature type="strand" evidence="13">
    <location>
        <begin position="71"/>
        <end position="74"/>
    </location>
</feature>
<feature type="strand" evidence="12">
    <location>
        <begin position="78"/>
        <end position="84"/>
    </location>
</feature>
<feature type="strand" evidence="12">
    <location>
        <begin position="91"/>
        <end position="97"/>
    </location>
</feature>
<feature type="turn" evidence="12">
    <location>
        <begin position="99"/>
        <end position="103"/>
    </location>
</feature>
<feature type="strand" evidence="12">
    <location>
        <begin position="104"/>
        <end position="106"/>
    </location>
</feature>
<feature type="turn" evidence="12">
    <location>
        <begin position="108"/>
        <end position="111"/>
    </location>
</feature>
<feature type="helix" evidence="12">
    <location>
        <begin position="112"/>
        <end position="130"/>
    </location>
</feature>
<feature type="strand" evidence="14">
    <location>
        <begin position="131"/>
        <end position="133"/>
    </location>
</feature>
<feature type="strand" evidence="12">
    <location>
        <begin position="145"/>
        <end position="150"/>
    </location>
</feature>
<feature type="strand" evidence="12">
    <location>
        <begin position="152"/>
        <end position="154"/>
    </location>
</feature>
<feature type="helix" evidence="12">
    <location>
        <begin position="159"/>
        <end position="168"/>
    </location>
</feature>
<feature type="turn" evidence="12">
    <location>
        <begin position="169"/>
        <end position="171"/>
    </location>
</feature>
<feature type="strand" evidence="12">
    <location>
        <begin position="174"/>
        <end position="178"/>
    </location>
</feature>
<feature type="helix" evidence="12">
    <location>
        <begin position="181"/>
        <end position="183"/>
    </location>
</feature>
<feature type="helix" evidence="12">
    <location>
        <begin position="186"/>
        <end position="202"/>
    </location>
</feature>
<feature type="strand" evidence="13">
    <location>
        <begin position="213"/>
        <end position="215"/>
    </location>
</feature>
<feature type="helix" evidence="12">
    <location>
        <begin position="217"/>
        <end position="227"/>
    </location>
</feature>
<feature type="strand" evidence="12">
    <location>
        <begin position="231"/>
        <end position="233"/>
    </location>
</feature>
<feature type="strand" evidence="12">
    <location>
        <begin position="238"/>
        <end position="243"/>
    </location>
</feature>
<feature type="strand" evidence="12">
    <location>
        <begin position="246"/>
        <end position="252"/>
    </location>
</feature>
<feature type="strand" evidence="12">
    <location>
        <begin position="257"/>
        <end position="259"/>
    </location>
</feature>
<feature type="turn" evidence="12">
    <location>
        <begin position="263"/>
        <end position="265"/>
    </location>
</feature>
<feature type="helix" evidence="12">
    <location>
        <begin position="268"/>
        <end position="276"/>
    </location>
</feature>
<feature type="turn" evidence="13">
    <location>
        <begin position="277"/>
        <end position="279"/>
    </location>
</feature>
<feature type="helix" evidence="12">
    <location>
        <begin position="280"/>
        <end position="289"/>
    </location>
</feature>
<feature type="helix" evidence="12">
    <location>
        <begin position="291"/>
        <end position="301"/>
    </location>
</feature>
<sequence>MDPLSSVQPASYVGFDTITNQIEHRLLKKGFQFNIMVVGQSGLGKSTLINTLFASHLIDSATGDDISALPVTKTTEMKISTHTLVEDRVRLNINVIDTPGFGDFIDNSKAWEPIVKYIKEQHSQYLRKELTAQRERFITDTRVHAILYFLQPNGKELSRLDVEALKRLTEIANVIPVIGKSDTLTLDERTEFRELIQNEFEKYNFKIYPYDSEELTDEELELNRSVRSIIPFAVVGSENEIEINGETFRGRKTRWSAINVEDINQCDFVYLREFLIRTHLQDLIETTSYIHYEGFRARQLIALKENANSRSSAHMSSNAIQR</sequence>
<dbReference type="EMBL" id="L16549">
    <property type="protein sequence ID" value="AAB49377.1"/>
    <property type="molecule type" value="Genomic_DNA"/>
</dbReference>
<dbReference type="EMBL" id="S48552">
    <property type="protein sequence ID" value="AAD13856.1"/>
    <property type="molecule type" value="Genomic_DNA"/>
</dbReference>
<dbReference type="EMBL" id="X59720">
    <property type="protein sequence ID" value="CAA42339.1"/>
    <property type="molecule type" value="Genomic_DNA"/>
</dbReference>
<dbReference type="EMBL" id="BK006937">
    <property type="protein sequence ID" value="DAA07481.1"/>
    <property type="molecule type" value="Genomic_DNA"/>
</dbReference>
<dbReference type="PIR" id="S19441">
    <property type="entry name" value="S19441"/>
</dbReference>
<dbReference type="RefSeq" id="NP_009928.1">
    <property type="nucleotide sequence ID" value="NM_001178715.1"/>
</dbReference>
<dbReference type="PDB" id="8FWP">
    <property type="method" value="X-ray"/>
    <property type="resolution" value="2.22 A"/>
    <property type="chains" value="A=30-302"/>
</dbReference>
<dbReference type="PDB" id="8PFH">
    <property type="method" value="X-ray"/>
    <property type="resolution" value="3.24 A"/>
    <property type="chains" value="A=30-322"/>
</dbReference>
<dbReference type="PDB" id="8SGD">
    <property type="method" value="X-ray"/>
    <property type="resolution" value="2.66 A"/>
    <property type="chains" value="A/C=11-322"/>
</dbReference>
<dbReference type="PDB" id="9GD4">
    <property type="method" value="X-ray"/>
    <property type="resolution" value="2.04 A"/>
    <property type="chains" value="A=30-322"/>
</dbReference>
<dbReference type="PDBsum" id="8FWP"/>
<dbReference type="PDBsum" id="8PFH"/>
<dbReference type="PDBsum" id="8SGD"/>
<dbReference type="PDBsum" id="9GD4"/>
<dbReference type="SMR" id="P25342"/>
<dbReference type="BioGRID" id="30980">
    <property type="interactions" value="590"/>
</dbReference>
<dbReference type="ComplexPortal" id="CPX-1675">
    <property type="entry name" value="Septin complex"/>
</dbReference>
<dbReference type="ComplexPortal" id="CPX-1712">
    <property type="entry name" value="Gin4 serine/threonine kinase complex"/>
</dbReference>
<dbReference type="DIP" id="DIP-673N"/>
<dbReference type="FunCoup" id="P25342">
    <property type="interactions" value="311"/>
</dbReference>
<dbReference type="IntAct" id="P25342">
    <property type="interactions" value="55"/>
</dbReference>
<dbReference type="MINT" id="P25342"/>
<dbReference type="STRING" id="4932.YCR002C"/>
<dbReference type="iPTMnet" id="P25342"/>
<dbReference type="PaxDb" id="4932-YCR002C"/>
<dbReference type="PeptideAtlas" id="P25342"/>
<dbReference type="EnsemblFungi" id="YCR002C_mRNA">
    <property type="protein sequence ID" value="YCR002C"/>
    <property type="gene ID" value="YCR002C"/>
</dbReference>
<dbReference type="GeneID" id="850358"/>
<dbReference type="KEGG" id="sce:YCR002C"/>
<dbReference type="AGR" id="SGD:S000000595"/>
<dbReference type="SGD" id="S000000595">
    <property type="gene designation" value="CDC10"/>
</dbReference>
<dbReference type="VEuPathDB" id="FungiDB:YCR002C"/>
<dbReference type="eggNOG" id="KOG1547">
    <property type="taxonomic scope" value="Eukaryota"/>
</dbReference>
<dbReference type="GeneTree" id="ENSGT00940000175654"/>
<dbReference type="HOGENOM" id="CLU_017718_7_1_1"/>
<dbReference type="InParanoid" id="P25342"/>
<dbReference type="OMA" id="QCEFVYL"/>
<dbReference type="OrthoDB" id="416553at2759"/>
<dbReference type="BioCyc" id="YEAST:G3O-29321-MONOMER"/>
<dbReference type="BioGRID-ORCS" id="850358">
    <property type="hits" value="2 hits in 10 CRISPR screens"/>
</dbReference>
<dbReference type="PRO" id="PR:P25342"/>
<dbReference type="Proteomes" id="UP000002311">
    <property type="component" value="Chromosome III"/>
</dbReference>
<dbReference type="RNAct" id="P25342">
    <property type="molecule type" value="protein"/>
</dbReference>
<dbReference type="GO" id="GO:0005619">
    <property type="term" value="C:ascospore wall"/>
    <property type="evidence" value="ECO:0000303"/>
    <property type="project" value="ComplexPortal"/>
</dbReference>
<dbReference type="GO" id="GO:0042764">
    <property type="term" value="C:ascospore-type prospore"/>
    <property type="evidence" value="ECO:0000314"/>
    <property type="project" value="SGD"/>
</dbReference>
<dbReference type="GO" id="GO:0032153">
    <property type="term" value="C:cell division site"/>
    <property type="evidence" value="ECO:0000318"/>
    <property type="project" value="GO_Central"/>
</dbReference>
<dbReference type="GO" id="GO:0005935">
    <property type="term" value="C:cellular bud neck"/>
    <property type="evidence" value="ECO:0007005"/>
    <property type="project" value="SGD"/>
</dbReference>
<dbReference type="GO" id="GO:0000144">
    <property type="term" value="C:cellular bud neck septin ring"/>
    <property type="evidence" value="ECO:0000314"/>
    <property type="project" value="SGD"/>
</dbReference>
<dbReference type="GO" id="GO:1990317">
    <property type="term" value="C:Gin4 complex"/>
    <property type="evidence" value="ECO:0000353"/>
    <property type="project" value="ComplexPortal"/>
</dbReference>
<dbReference type="GO" id="GO:0001400">
    <property type="term" value="C:mating projection base"/>
    <property type="evidence" value="ECO:0000314"/>
    <property type="project" value="SGD"/>
</dbReference>
<dbReference type="GO" id="GO:0043332">
    <property type="term" value="C:mating projection tip"/>
    <property type="evidence" value="ECO:0007005"/>
    <property type="project" value="SGD"/>
</dbReference>
<dbReference type="GO" id="GO:0072687">
    <property type="term" value="C:meiotic spindle"/>
    <property type="evidence" value="ECO:0000314"/>
    <property type="project" value="SGD"/>
</dbReference>
<dbReference type="GO" id="GO:0015630">
    <property type="term" value="C:microtubule cytoskeleton"/>
    <property type="evidence" value="ECO:0000318"/>
    <property type="project" value="GO_Central"/>
</dbReference>
<dbReference type="GO" id="GO:0005628">
    <property type="term" value="C:prospore membrane"/>
    <property type="evidence" value="ECO:0000314"/>
    <property type="project" value="SGD"/>
</dbReference>
<dbReference type="GO" id="GO:0031105">
    <property type="term" value="C:septin complex"/>
    <property type="evidence" value="ECO:0000314"/>
    <property type="project" value="SGD"/>
</dbReference>
<dbReference type="GO" id="GO:0032160">
    <property type="term" value="C:septin filament array"/>
    <property type="evidence" value="ECO:0000314"/>
    <property type="project" value="SGD"/>
</dbReference>
<dbReference type="GO" id="GO:0005940">
    <property type="term" value="C:septin ring"/>
    <property type="evidence" value="ECO:0000318"/>
    <property type="project" value="GO_Central"/>
</dbReference>
<dbReference type="GO" id="GO:0005876">
    <property type="term" value="C:spindle microtubule"/>
    <property type="evidence" value="ECO:0000314"/>
    <property type="project" value="SGD"/>
</dbReference>
<dbReference type="GO" id="GO:0005545">
    <property type="term" value="F:1-phosphatidylinositol binding"/>
    <property type="evidence" value="ECO:0000314"/>
    <property type="project" value="SGD"/>
</dbReference>
<dbReference type="GO" id="GO:0005525">
    <property type="term" value="F:GTP binding"/>
    <property type="evidence" value="ECO:0007669"/>
    <property type="project" value="UniProtKB-KW"/>
</dbReference>
<dbReference type="GO" id="GO:0003924">
    <property type="term" value="F:GTPase activity"/>
    <property type="evidence" value="ECO:0000314"/>
    <property type="project" value="SGD"/>
</dbReference>
<dbReference type="GO" id="GO:0060090">
    <property type="term" value="F:molecular adaptor activity"/>
    <property type="evidence" value="ECO:0000314"/>
    <property type="project" value="SGD"/>
</dbReference>
<dbReference type="GO" id="GO:0070273">
    <property type="term" value="F:phosphatidylinositol-4-phosphate binding"/>
    <property type="evidence" value="ECO:0000314"/>
    <property type="project" value="SGD"/>
</dbReference>
<dbReference type="GO" id="GO:0010314">
    <property type="term" value="F:phosphatidylinositol-5-phosphate binding"/>
    <property type="evidence" value="ECO:0000314"/>
    <property type="project" value="SGD"/>
</dbReference>
<dbReference type="GO" id="GO:0005200">
    <property type="term" value="F:structural constituent of cytoskeleton"/>
    <property type="evidence" value="ECO:0000314"/>
    <property type="project" value="SGD"/>
</dbReference>
<dbReference type="GO" id="GO:0032186">
    <property type="term" value="P:cellular bud neck septin ring organization"/>
    <property type="evidence" value="ECO:0000303"/>
    <property type="project" value="ComplexPortal"/>
</dbReference>
<dbReference type="GO" id="GO:0061640">
    <property type="term" value="P:cytoskeleton-dependent cytokinesis"/>
    <property type="evidence" value="ECO:0000318"/>
    <property type="project" value="GO_Central"/>
</dbReference>
<dbReference type="GO" id="GO:0010458">
    <property type="term" value="P:exit from mitosis"/>
    <property type="evidence" value="ECO:0000315"/>
    <property type="project" value="SGD"/>
</dbReference>
<dbReference type="GO" id="GO:0000281">
    <property type="term" value="P:mitotic cytokinesis"/>
    <property type="evidence" value="ECO:0000315"/>
    <property type="project" value="SGD"/>
</dbReference>
<dbReference type="GO" id="GO:0008104">
    <property type="term" value="P:protein localization"/>
    <property type="evidence" value="ECO:0000318"/>
    <property type="project" value="GO_Central"/>
</dbReference>
<dbReference type="GO" id="GO:0000921">
    <property type="term" value="P:septin ring assembly"/>
    <property type="evidence" value="ECO:0000315"/>
    <property type="project" value="SGD"/>
</dbReference>
<dbReference type="GO" id="GO:0000920">
    <property type="term" value="P:septum digestion after cytokinesis"/>
    <property type="evidence" value="ECO:0000303"/>
    <property type="project" value="ComplexPortal"/>
</dbReference>
<dbReference type="GO" id="GO:0043934">
    <property type="term" value="P:sporulation"/>
    <property type="evidence" value="ECO:0000314"/>
    <property type="project" value="SGD"/>
</dbReference>
<dbReference type="CDD" id="cd01850">
    <property type="entry name" value="CDC_Septin"/>
    <property type="match status" value="1"/>
</dbReference>
<dbReference type="FunFam" id="3.40.50.300:FF:000260">
    <property type="entry name" value="Cell division control 10"/>
    <property type="match status" value="1"/>
</dbReference>
<dbReference type="Gene3D" id="3.40.50.300">
    <property type="entry name" value="P-loop containing nucleotide triphosphate hydrolases"/>
    <property type="match status" value="1"/>
</dbReference>
<dbReference type="InterPro" id="IPR030379">
    <property type="entry name" value="G_SEPTIN_dom"/>
</dbReference>
<dbReference type="InterPro" id="IPR027417">
    <property type="entry name" value="P-loop_NTPase"/>
</dbReference>
<dbReference type="InterPro" id="IPR016491">
    <property type="entry name" value="Septin"/>
</dbReference>
<dbReference type="PANTHER" id="PTHR18884">
    <property type="entry name" value="SEPTIN"/>
    <property type="match status" value="1"/>
</dbReference>
<dbReference type="Pfam" id="PF00735">
    <property type="entry name" value="Septin"/>
    <property type="match status" value="1"/>
</dbReference>
<dbReference type="PIRSF" id="PIRSF006698">
    <property type="entry name" value="Septin"/>
    <property type="match status" value="1"/>
</dbReference>
<dbReference type="SUPFAM" id="SSF52540">
    <property type="entry name" value="P-loop containing nucleoside triphosphate hydrolases"/>
    <property type="match status" value="1"/>
</dbReference>
<dbReference type="PROSITE" id="PS51719">
    <property type="entry name" value="G_SEPTIN"/>
    <property type="match status" value="1"/>
</dbReference>
<gene>
    <name type="primary">CDC10</name>
    <name type="ordered locus">YCR002C</name>
    <name type="ORF">YCR022</name>
    <name type="ORF">YCR2C</name>
</gene>
<protein>
    <recommendedName>
        <fullName>Cell division control protein 10</fullName>
    </recommendedName>
</protein>